<reference key="1">
    <citation type="journal article" date="1996" name="Microbiology">
        <title>Systematic sequencing of the 283 kb 210 degrees-232 degrees region of the Bacillus subtilis genome containing the skin element and many sporulation genes.</title>
        <authorList>
            <person name="Mizuno M."/>
            <person name="Masuda S."/>
            <person name="Takemaru K."/>
            <person name="Hosono S."/>
            <person name="Sato T."/>
            <person name="Takeuchi M."/>
            <person name="Kobayashi Y."/>
        </authorList>
    </citation>
    <scope>NUCLEOTIDE SEQUENCE [GENOMIC DNA]</scope>
    <source>
        <strain>168 / JH642</strain>
    </source>
</reference>
<reference key="2">
    <citation type="journal article" date="1997" name="Nature">
        <title>The complete genome sequence of the Gram-positive bacterium Bacillus subtilis.</title>
        <authorList>
            <person name="Kunst F."/>
            <person name="Ogasawara N."/>
            <person name="Moszer I."/>
            <person name="Albertini A.M."/>
            <person name="Alloni G."/>
            <person name="Azevedo V."/>
            <person name="Bertero M.G."/>
            <person name="Bessieres P."/>
            <person name="Bolotin A."/>
            <person name="Borchert S."/>
            <person name="Borriss R."/>
            <person name="Boursier L."/>
            <person name="Brans A."/>
            <person name="Braun M."/>
            <person name="Brignell S.C."/>
            <person name="Bron S."/>
            <person name="Brouillet S."/>
            <person name="Bruschi C.V."/>
            <person name="Caldwell B."/>
            <person name="Capuano V."/>
            <person name="Carter N.M."/>
            <person name="Choi S.-K."/>
            <person name="Codani J.-J."/>
            <person name="Connerton I.F."/>
            <person name="Cummings N.J."/>
            <person name="Daniel R.A."/>
            <person name="Denizot F."/>
            <person name="Devine K.M."/>
            <person name="Duesterhoeft A."/>
            <person name="Ehrlich S.D."/>
            <person name="Emmerson P.T."/>
            <person name="Entian K.-D."/>
            <person name="Errington J."/>
            <person name="Fabret C."/>
            <person name="Ferrari E."/>
            <person name="Foulger D."/>
            <person name="Fritz C."/>
            <person name="Fujita M."/>
            <person name="Fujita Y."/>
            <person name="Fuma S."/>
            <person name="Galizzi A."/>
            <person name="Galleron N."/>
            <person name="Ghim S.-Y."/>
            <person name="Glaser P."/>
            <person name="Goffeau A."/>
            <person name="Golightly E.J."/>
            <person name="Grandi G."/>
            <person name="Guiseppi G."/>
            <person name="Guy B.J."/>
            <person name="Haga K."/>
            <person name="Haiech J."/>
            <person name="Harwood C.R."/>
            <person name="Henaut A."/>
            <person name="Hilbert H."/>
            <person name="Holsappel S."/>
            <person name="Hosono S."/>
            <person name="Hullo M.-F."/>
            <person name="Itaya M."/>
            <person name="Jones L.-M."/>
            <person name="Joris B."/>
            <person name="Karamata D."/>
            <person name="Kasahara Y."/>
            <person name="Klaerr-Blanchard M."/>
            <person name="Klein C."/>
            <person name="Kobayashi Y."/>
            <person name="Koetter P."/>
            <person name="Koningstein G."/>
            <person name="Krogh S."/>
            <person name="Kumano M."/>
            <person name="Kurita K."/>
            <person name="Lapidus A."/>
            <person name="Lardinois S."/>
            <person name="Lauber J."/>
            <person name="Lazarevic V."/>
            <person name="Lee S.-M."/>
            <person name="Levine A."/>
            <person name="Liu H."/>
            <person name="Masuda S."/>
            <person name="Mauel C."/>
            <person name="Medigue C."/>
            <person name="Medina N."/>
            <person name="Mellado R.P."/>
            <person name="Mizuno M."/>
            <person name="Moestl D."/>
            <person name="Nakai S."/>
            <person name="Noback M."/>
            <person name="Noone D."/>
            <person name="O'Reilly M."/>
            <person name="Ogawa K."/>
            <person name="Ogiwara A."/>
            <person name="Oudega B."/>
            <person name="Park S.-H."/>
            <person name="Parro V."/>
            <person name="Pohl T.M."/>
            <person name="Portetelle D."/>
            <person name="Porwollik S."/>
            <person name="Prescott A.M."/>
            <person name="Presecan E."/>
            <person name="Pujic P."/>
            <person name="Purnelle B."/>
            <person name="Rapoport G."/>
            <person name="Rey M."/>
            <person name="Reynolds S."/>
            <person name="Rieger M."/>
            <person name="Rivolta C."/>
            <person name="Rocha E."/>
            <person name="Roche B."/>
            <person name="Rose M."/>
            <person name="Sadaie Y."/>
            <person name="Sato T."/>
            <person name="Scanlan E."/>
            <person name="Schleich S."/>
            <person name="Schroeter R."/>
            <person name="Scoffone F."/>
            <person name="Sekiguchi J."/>
            <person name="Sekowska A."/>
            <person name="Seror S.J."/>
            <person name="Serror P."/>
            <person name="Shin B.-S."/>
            <person name="Soldo B."/>
            <person name="Sorokin A."/>
            <person name="Tacconi E."/>
            <person name="Takagi T."/>
            <person name="Takahashi H."/>
            <person name="Takemaru K."/>
            <person name="Takeuchi M."/>
            <person name="Tamakoshi A."/>
            <person name="Tanaka T."/>
            <person name="Terpstra P."/>
            <person name="Tognoni A."/>
            <person name="Tosato V."/>
            <person name="Uchiyama S."/>
            <person name="Vandenbol M."/>
            <person name="Vannier F."/>
            <person name="Vassarotti A."/>
            <person name="Viari A."/>
            <person name="Wambutt R."/>
            <person name="Wedler E."/>
            <person name="Wedler H."/>
            <person name="Weitzenegger T."/>
            <person name="Winters P."/>
            <person name="Wipat A."/>
            <person name="Yamamoto H."/>
            <person name="Yamane K."/>
            <person name="Yasumoto K."/>
            <person name="Yata K."/>
            <person name="Yoshida K."/>
            <person name="Yoshikawa H.-F."/>
            <person name="Zumstein E."/>
            <person name="Yoshikawa H."/>
            <person name="Danchin A."/>
        </authorList>
    </citation>
    <scope>NUCLEOTIDE SEQUENCE [LARGE SCALE GENOMIC DNA]</scope>
    <source>
        <strain>168</strain>
    </source>
</reference>
<reference key="3">
    <citation type="journal article" date="1999" name="J. Bacteriol.">
        <title>Characterization of a new sigma-K-dependent peptidoglycan hydrolase gene that plays a role in Bacillus subtilis mother cell lysis.</title>
        <authorList>
            <person name="Nugroho F.A."/>
            <person name="Yamamoto H."/>
            <person name="Kobayashi Y."/>
            <person name="Sekiguchi J."/>
        </authorList>
    </citation>
    <scope>CHARACTERIZATION</scope>
    <source>
        <strain>168</strain>
    </source>
</reference>
<keyword id="KW-0961">Cell wall biogenesis/degradation</keyword>
<keyword id="KW-0178">Competence</keyword>
<keyword id="KW-0378">Hydrolase</keyword>
<keyword id="KW-1185">Reference proteome</keyword>
<keyword id="KW-0964">Secreted</keyword>
<keyword id="KW-0732">Signal</keyword>
<keyword id="KW-0749">Sporulation</keyword>
<comment type="function">
    <text>Autolysins are involved in some important biological processes such as cell separation, cell-wall turnover, competence for genetic transformation, formation of the flagella and sporulation. Could play a role in mother cell lysis with CwlC.</text>
</comment>
<comment type="catalytic activity">
    <reaction>
        <text>Hydrolyzes the link between N-acetylmuramoyl residues and L-amino acid residues in certain cell-wall glycopeptides.</text>
        <dbReference type="EC" id="3.5.1.28"/>
    </reaction>
</comment>
<comment type="biophysicochemical properties">
    <phDependence>
        <text>Optimum pH is 7.0.</text>
    </phDependence>
</comment>
<comment type="subcellular location">
    <subcellularLocation>
        <location evidence="2">Secreted</location>
    </subcellularLocation>
</comment>
<comment type="developmental stage">
    <text>Expressed during the late sporulation phase.</text>
</comment>
<comment type="induction">
    <text>Expression is GerE and sigma K-dependent.</text>
</comment>
<comment type="similarity">
    <text evidence="2">Belongs to the N-acetylmuramoyl-L-alanine amidase 2 family.</text>
</comment>
<name>CWLH_BACSU</name>
<evidence type="ECO:0000255" key="1"/>
<evidence type="ECO:0000305" key="2"/>
<sequence>MVTIKKDFIPVSNDNRPGYAMAPAYITVHNTANTAKGADAKMHAKFVKNPNTSESWHFTVDDSVIYQHLPIDENGWHAGDGTNGTGNRKSIGIEICENADGDFEKATSNAQWLIRKLMKENNIPLNRVVPHKKWSGKECPRKLLDHWNSFLNGISSSDTPPKETSPSYPLPSGVIKLTSPYRKGTNILQLQKALAVLHFYPDKGAKNNGIDGVYGPKTANAVKRFQLMNGLTADGIYGPKTKAKLKSKLK</sequence>
<protein>
    <recommendedName>
        <fullName>N-acetylmuramoyl-L-alanine amidase CwlH</fullName>
        <ecNumber>3.5.1.28</ecNumber>
    </recommendedName>
    <alternativeName>
        <fullName>Autolysin</fullName>
    </alternativeName>
    <alternativeName>
        <fullName>Cell wall hydrolase</fullName>
    </alternativeName>
</protein>
<gene>
    <name type="primary">cwlH</name>
    <name type="synonym">yqeE</name>
    <name type="ordered locus">BSU25710</name>
</gene>
<proteinExistence type="evidence at protein level"/>
<accession>P54450</accession>
<organism>
    <name type="scientific">Bacillus subtilis (strain 168)</name>
    <dbReference type="NCBI Taxonomy" id="224308"/>
    <lineage>
        <taxon>Bacteria</taxon>
        <taxon>Bacillati</taxon>
        <taxon>Bacillota</taxon>
        <taxon>Bacilli</taxon>
        <taxon>Bacillales</taxon>
        <taxon>Bacillaceae</taxon>
        <taxon>Bacillus</taxon>
    </lineage>
</organism>
<feature type="signal peptide" evidence="1">
    <location>
        <begin position="1"/>
        <end position="44"/>
    </location>
</feature>
<feature type="chain" id="PRO_0000006454" description="N-acetylmuramoyl-L-alanine amidase CwlH">
    <location>
        <begin position="45"/>
        <end position="250"/>
    </location>
</feature>
<feature type="domain" description="N-acetylmuramoyl-L-alanine amidase" evidence="1">
    <location>
        <begin position="45"/>
        <end position="141"/>
    </location>
</feature>
<dbReference type="EC" id="3.5.1.28"/>
<dbReference type="EMBL" id="D84432">
    <property type="protein sequence ID" value="BAA12441.1"/>
    <property type="molecule type" value="Genomic_DNA"/>
</dbReference>
<dbReference type="EMBL" id="AL009126">
    <property type="protein sequence ID" value="CAB14512.1"/>
    <property type="molecule type" value="Genomic_DNA"/>
</dbReference>
<dbReference type="PIR" id="A69951">
    <property type="entry name" value="A69951"/>
</dbReference>
<dbReference type="RefSeq" id="NP_390448.1">
    <property type="nucleotide sequence ID" value="NC_000964.3"/>
</dbReference>
<dbReference type="RefSeq" id="WP_003229963.1">
    <property type="nucleotide sequence ID" value="NZ_OZ025638.1"/>
</dbReference>
<dbReference type="SMR" id="P54450"/>
<dbReference type="FunCoup" id="P54450">
    <property type="interactions" value="10"/>
</dbReference>
<dbReference type="STRING" id="224308.BSU25710"/>
<dbReference type="PaxDb" id="224308-BSU25710"/>
<dbReference type="EnsemblBacteria" id="CAB14512">
    <property type="protein sequence ID" value="CAB14512"/>
    <property type="gene ID" value="BSU_25710"/>
</dbReference>
<dbReference type="GeneID" id="937808"/>
<dbReference type="KEGG" id="bsu:BSU25710"/>
<dbReference type="PATRIC" id="fig|224308.179.peg.2796"/>
<dbReference type="eggNOG" id="COG3409">
    <property type="taxonomic scope" value="Bacteria"/>
</dbReference>
<dbReference type="eggNOG" id="COG5632">
    <property type="taxonomic scope" value="Bacteria"/>
</dbReference>
<dbReference type="InParanoid" id="P54450"/>
<dbReference type="OrthoDB" id="9794294at2"/>
<dbReference type="PhylomeDB" id="P54450"/>
<dbReference type="BioCyc" id="BSUB:BSU25710-MONOMER"/>
<dbReference type="Proteomes" id="UP000001570">
    <property type="component" value="Chromosome"/>
</dbReference>
<dbReference type="GO" id="GO:0005576">
    <property type="term" value="C:extracellular region"/>
    <property type="evidence" value="ECO:0007669"/>
    <property type="project" value="UniProtKB-SubCell"/>
</dbReference>
<dbReference type="GO" id="GO:0008745">
    <property type="term" value="F:N-acetylmuramoyl-L-alanine amidase activity"/>
    <property type="evidence" value="ECO:0000318"/>
    <property type="project" value="GO_Central"/>
</dbReference>
<dbReference type="GO" id="GO:0071555">
    <property type="term" value="P:cell wall organization"/>
    <property type="evidence" value="ECO:0007669"/>
    <property type="project" value="UniProtKB-KW"/>
</dbReference>
<dbReference type="GO" id="GO:0030420">
    <property type="term" value="P:establishment of competence for transformation"/>
    <property type="evidence" value="ECO:0007669"/>
    <property type="project" value="UniProtKB-KW"/>
</dbReference>
<dbReference type="GO" id="GO:0009253">
    <property type="term" value="P:peptidoglycan catabolic process"/>
    <property type="evidence" value="ECO:0000318"/>
    <property type="project" value="GO_Central"/>
</dbReference>
<dbReference type="GO" id="GO:0009254">
    <property type="term" value="P:peptidoglycan turnover"/>
    <property type="evidence" value="ECO:0000318"/>
    <property type="project" value="GO_Central"/>
</dbReference>
<dbReference type="GO" id="GO:0030435">
    <property type="term" value="P:sporulation resulting in formation of a cellular spore"/>
    <property type="evidence" value="ECO:0007669"/>
    <property type="project" value="UniProtKB-KW"/>
</dbReference>
<dbReference type="CDD" id="cd06583">
    <property type="entry name" value="PGRP"/>
    <property type="match status" value="1"/>
</dbReference>
<dbReference type="FunFam" id="3.40.80.10:FF:000007">
    <property type="entry name" value="N-acetylmuramoyl-L-alanine amidase XlyA"/>
    <property type="match status" value="1"/>
</dbReference>
<dbReference type="Gene3D" id="3.40.80.10">
    <property type="entry name" value="Peptidoglycan recognition protein-like"/>
    <property type="match status" value="1"/>
</dbReference>
<dbReference type="Gene3D" id="1.10.101.10">
    <property type="entry name" value="PGBD-like superfamily/PGBD"/>
    <property type="match status" value="1"/>
</dbReference>
<dbReference type="InterPro" id="IPR036505">
    <property type="entry name" value="Amidase/PGRP_sf"/>
</dbReference>
<dbReference type="InterPro" id="IPR002502">
    <property type="entry name" value="Amidase_domain"/>
</dbReference>
<dbReference type="InterPro" id="IPR051206">
    <property type="entry name" value="NAMLAA_amidase_2"/>
</dbReference>
<dbReference type="InterPro" id="IPR002477">
    <property type="entry name" value="Peptidoglycan-bd-like"/>
</dbReference>
<dbReference type="InterPro" id="IPR036365">
    <property type="entry name" value="PGBD-like_sf"/>
</dbReference>
<dbReference type="InterPro" id="IPR036366">
    <property type="entry name" value="PGBDSf"/>
</dbReference>
<dbReference type="PANTHER" id="PTHR30417">
    <property type="entry name" value="N-ACETYLMURAMOYL-L-ALANINE AMIDASE AMID"/>
    <property type="match status" value="1"/>
</dbReference>
<dbReference type="PANTHER" id="PTHR30417:SF11">
    <property type="entry name" value="N-ACETYLMURAMOYL-L-ALANINE AMIDASE XLYA"/>
    <property type="match status" value="1"/>
</dbReference>
<dbReference type="Pfam" id="PF01510">
    <property type="entry name" value="Amidase_2"/>
    <property type="match status" value="1"/>
</dbReference>
<dbReference type="Pfam" id="PF01471">
    <property type="entry name" value="PG_binding_1"/>
    <property type="match status" value="1"/>
</dbReference>
<dbReference type="SMART" id="SM00644">
    <property type="entry name" value="Ami_2"/>
    <property type="match status" value="1"/>
</dbReference>
<dbReference type="SUPFAM" id="SSF55846">
    <property type="entry name" value="N-acetylmuramoyl-L-alanine amidase-like"/>
    <property type="match status" value="1"/>
</dbReference>
<dbReference type="SUPFAM" id="SSF47090">
    <property type="entry name" value="PGBD-like"/>
    <property type="match status" value="1"/>
</dbReference>